<feature type="chain" id="PRO_1000137301" description="H(+)/Cl(-) exchange transporter ClcA">
    <location>
        <begin position="1"/>
        <end position="473"/>
    </location>
</feature>
<feature type="topological domain" description="Cytoplasmic" evidence="1">
    <location>
        <begin position="1"/>
        <end position="32"/>
    </location>
</feature>
<feature type="transmembrane region" description="Helical" evidence="1">
    <location>
        <begin position="33"/>
        <end position="69"/>
    </location>
</feature>
<feature type="topological domain" description="Periplasmic" evidence="1">
    <location>
        <begin position="70"/>
        <end position="76"/>
    </location>
</feature>
<feature type="transmembrane region" description="Helical" evidence="1">
    <location>
        <begin position="77"/>
        <end position="100"/>
    </location>
</feature>
<feature type="intramembrane region" description="Helical" evidence="1">
    <location>
        <begin position="109"/>
        <end position="116"/>
    </location>
</feature>
<feature type="topological domain" description="Cytoplasmic" evidence="1">
    <location>
        <begin position="117"/>
        <end position="123"/>
    </location>
</feature>
<feature type="transmembrane region" description="Helical" evidence="1">
    <location>
        <begin position="124"/>
        <end position="141"/>
    </location>
</feature>
<feature type="transmembrane region" description="Helical" evidence="1">
    <location>
        <begin position="148"/>
        <end position="166"/>
    </location>
</feature>
<feature type="topological domain" description="Cytoplasmic" evidence="1">
    <location>
        <begin position="167"/>
        <end position="176"/>
    </location>
</feature>
<feature type="intramembrane region" description="Helical" evidence="1">
    <location>
        <begin position="177"/>
        <end position="189"/>
    </location>
</feature>
<feature type="intramembrane region" description="Helical" evidence="1">
    <location>
        <begin position="193"/>
        <end position="201"/>
    </location>
</feature>
<feature type="topological domain" description="Cytoplasmic" evidence="1">
    <location>
        <begin position="202"/>
        <end position="214"/>
    </location>
</feature>
<feature type="transmembrane region" description="Helical" evidence="1">
    <location>
        <begin position="215"/>
        <end position="232"/>
    </location>
</feature>
<feature type="topological domain" description="Periplasmic" evidence="1">
    <location>
        <begin position="233"/>
        <end position="252"/>
    </location>
</feature>
<feature type="transmembrane region" description="Helical" evidence="1">
    <location>
        <begin position="253"/>
        <end position="281"/>
    </location>
</feature>
<feature type="topological domain" description="Cytoplasmic" evidence="1">
    <location>
        <begin position="282"/>
        <end position="287"/>
    </location>
</feature>
<feature type="transmembrane region" description="Helical" evidence="1">
    <location>
        <begin position="288"/>
        <end position="309"/>
    </location>
</feature>
<feature type="topological domain" description="Periplasmic" evidence="1">
    <location>
        <begin position="310"/>
        <end position="329"/>
    </location>
</feature>
<feature type="transmembrane region" description="Helical" evidence="1">
    <location>
        <begin position="330"/>
        <end position="349"/>
    </location>
</feature>
<feature type="transmembrane region" description="Helical" evidence="1">
    <location>
        <begin position="355"/>
        <end position="376"/>
    </location>
</feature>
<feature type="topological domain" description="Periplasmic" evidence="1">
    <location>
        <begin position="377"/>
        <end position="386"/>
    </location>
</feature>
<feature type="intramembrane region" description="Helical" evidence="1">
    <location>
        <begin position="387"/>
        <end position="401"/>
    </location>
</feature>
<feature type="intramembrane region" description="Note=Loop between two helices" evidence="1">
    <location>
        <begin position="402"/>
        <end position="404"/>
    </location>
</feature>
<feature type="intramembrane region" description="Helical" evidence="1">
    <location>
        <begin position="405"/>
        <end position="416"/>
    </location>
</feature>
<feature type="intramembrane region" description="Note=Loop between two helices" evidence="1">
    <location>
        <begin position="417"/>
        <end position="421"/>
    </location>
</feature>
<feature type="transmembrane region" description="Helical" evidence="1">
    <location>
        <begin position="422"/>
        <end position="438"/>
    </location>
</feature>
<feature type="topological domain" description="Cytoplasmic" evidence="1">
    <location>
        <begin position="439"/>
        <end position="473"/>
    </location>
</feature>
<feature type="short sequence motif" description="Selectivity filter part_1" evidence="1">
    <location>
        <begin position="106"/>
        <end position="110"/>
    </location>
</feature>
<feature type="short sequence motif" description="Selectivity filter part_2" evidence="1">
    <location>
        <begin position="146"/>
        <end position="150"/>
    </location>
</feature>
<feature type="short sequence motif" description="Selectivity filter part_3" evidence="1">
    <location>
        <begin position="355"/>
        <end position="359"/>
    </location>
</feature>
<feature type="binding site" evidence="1">
    <location>
        <position position="107"/>
    </location>
    <ligand>
        <name>chloride</name>
        <dbReference type="ChEBI" id="CHEBI:17996"/>
    </ligand>
</feature>
<feature type="binding site" evidence="1">
    <location>
        <position position="356"/>
    </location>
    <ligand>
        <name>chloride</name>
        <dbReference type="ChEBI" id="CHEBI:17996"/>
    </ligand>
</feature>
<feature type="binding site" evidence="1">
    <location>
        <position position="357"/>
    </location>
    <ligand>
        <name>chloride</name>
        <dbReference type="ChEBI" id="CHEBI:17996"/>
    </ligand>
</feature>
<feature type="binding site" evidence="1">
    <location>
        <position position="445"/>
    </location>
    <ligand>
        <name>chloride</name>
        <dbReference type="ChEBI" id="CHEBI:17996"/>
    </ligand>
</feature>
<feature type="site" description="Mediates proton transfer from the outer aqueous phase to the interior of the protein; involved in linking H(+) and Cl(-) transport" evidence="1">
    <location>
        <position position="148"/>
    </location>
</feature>
<feature type="site" description="Mediates proton transfer from the protein to the inner aqueous phase" evidence="1">
    <location>
        <position position="203"/>
    </location>
</feature>
<comment type="function">
    <text evidence="1">Proton-coupled chloride transporter. Functions as antiport system and exchanges two chloride ions for 1 proton. Probably acts as an electrical shunt for an outwardly-directed proton pump that is linked to amino acid decarboxylation, as part of the extreme acid resistance (XAR) response.</text>
</comment>
<comment type="catalytic activity">
    <reaction evidence="1">
        <text>2 chloride(in) + H(+)(out) = 2 chloride(out) + H(+)(in)</text>
        <dbReference type="Rhea" id="RHEA:29567"/>
        <dbReference type="ChEBI" id="CHEBI:15378"/>
        <dbReference type="ChEBI" id="CHEBI:17996"/>
    </reaction>
</comment>
<comment type="subunit">
    <text evidence="1">Homodimer.</text>
</comment>
<comment type="subcellular location">
    <subcellularLocation>
        <location evidence="1">Cell inner membrane</location>
        <topology evidence="1">Multi-pass membrane protein</topology>
    </subcellularLocation>
</comment>
<comment type="similarity">
    <text evidence="1">Belongs to the chloride channel (TC 2.A.49) family. ClcA subfamily.</text>
</comment>
<accession>B7LWB6</accession>
<reference key="1">
    <citation type="journal article" date="2009" name="PLoS Genet.">
        <title>Organised genome dynamics in the Escherichia coli species results in highly diverse adaptive paths.</title>
        <authorList>
            <person name="Touchon M."/>
            <person name="Hoede C."/>
            <person name="Tenaillon O."/>
            <person name="Barbe V."/>
            <person name="Baeriswyl S."/>
            <person name="Bidet P."/>
            <person name="Bingen E."/>
            <person name="Bonacorsi S."/>
            <person name="Bouchier C."/>
            <person name="Bouvet O."/>
            <person name="Calteau A."/>
            <person name="Chiapello H."/>
            <person name="Clermont O."/>
            <person name="Cruveiller S."/>
            <person name="Danchin A."/>
            <person name="Diard M."/>
            <person name="Dossat C."/>
            <person name="Karoui M.E."/>
            <person name="Frapy E."/>
            <person name="Garry L."/>
            <person name="Ghigo J.M."/>
            <person name="Gilles A.M."/>
            <person name="Johnson J."/>
            <person name="Le Bouguenec C."/>
            <person name="Lescat M."/>
            <person name="Mangenot S."/>
            <person name="Martinez-Jehanne V."/>
            <person name="Matic I."/>
            <person name="Nassif X."/>
            <person name="Oztas S."/>
            <person name="Petit M.A."/>
            <person name="Pichon C."/>
            <person name="Rouy Z."/>
            <person name="Ruf C.S."/>
            <person name="Schneider D."/>
            <person name="Tourret J."/>
            <person name="Vacherie B."/>
            <person name="Vallenet D."/>
            <person name="Medigue C."/>
            <person name="Rocha E.P.C."/>
            <person name="Denamur E."/>
        </authorList>
    </citation>
    <scope>NUCLEOTIDE SEQUENCE [LARGE SCALE GENOMIC DNA]</scope>
    <source>
        <strain>ATCC 35469 / DSM 13698 / BCRC 15582 / CCUG 18766 / IAM 14443 / JCM 21226 / LMG 7866 / NBRC 102419 / NCTC 12128 / CDC 0568-73</strain>
    </source>
</reference>
<keyword id="KW-0050">Antiport</keyword>
<keyword id="KW-0997">Cell inner membrane</keyword>
<keyword id="KW-1003">Cell membrane</keyword>
<keyword id="KW-0868">Chloride</keyword>
<keyword id="KW-0406">Ion transport</keyword>
<keyword id="KW-0472">Membrane</keyword>
<keyword id="KW-0812">Transmembrane</keyword>
<keyword id="KW-1133">Transmembrane helix</keyword>
<keyword id="KW-0813">Transport</keyword>
<gene>
    <name evidence="1" type="primary">clcA</name>
    <name evidence="1" type="synonym">eriC</name>
    <name type="ordered locus">EFER_0178</name>
</gene>
<protein>
    <recommendedName>
        <fullName evidence="1">H(+)/Cl(-) exchange transporter ClcA</fullName>
    </recommendedName>
</protein>
<proteinExistence type="inferred from homology"/>
<name>CLCA_ESCF3</name>
<evidence type="ECO:0000255" key="1">
    <source>
        <dbReference type="HAMAP-Rule" id="MF_01128"/>
    </source>
</evidence>
<sequence>MKTDTPSLEIPQAARLRRRQLIRQLLERDKTPLAILFMAAVVGTLVGLAAVAFDKGVSWLQNQRMGALVHTADNYPLLLTVAFLCSAVLAMFGYFLVRKYAPEAGGSGIPEIEGALEDQRPVRWWRVLPVKFFGGLGTLGGGMVLGREGPTVQIGGNIGRMVLDIFRLKGDEARHTLLATGAAAGLAAAFNAPLAGILFIIEEMRPQFRYTLISIKAVFIGVIMSTIMYRIFNHEVALIDVGKLSDAPLNTLWLYLILGIIFGIFGPIFNKWVLGMQDLLHRVHGGNITKWVIMGGAIGGLCGLLGFVAPATSGGGFNLIPIATAGNFSMGMLVFIFVARVITTLLCFSSGAPGGIFAPMLALGTVLGTAFGMVAVELFPQYHLEAGTFAIAGMGALLAASIRAPLTGIILVLEMTDNYQLILPMIITGLGATLLAQFTGGKPLYSAILARTLAKQEAEQLARSKAASASENT</sequence>
<organism>
    <name type="scientific">Escherichia fergusonii (strain ATCC 35469 / DSM 13698 / CCUG 18766 / IAM 14443 / JCM 21226 / LMG 7866 / NBRC 102419 / NCTC 12128 / CDC 0568-73)</name>
    <dbReference type="NCBI Taxonomy" id="585054"/>
    <lineage>
        <taxon>Bacteria</taxon>
        <taxon>Pseudomonadati</taxon>
        <taxon>Pseudomonadota</taxon>
        <taxon>Gammaproteobacteria</taxon>
        <taxon>Enterobacterales</taxon>
        <taxon>Enterobacteriaceae</taxon>
        <taxon>Escherichia</taxon>
    </lineage>
</organism>
<dbReference type="EMBL" id="CU928158">
    <property type="protein sequence ID" value="CAQ87759.1"/>
    <property type="molecule type" value="Genomic_DNA"/>
</dbReference>
<dbReference type="RefSeq" id="WP_000845378.1">
    <property type="nucleotide sequence ID" value="NC_011740.1"/>
</dbReference>
<dbReference type="SMR" id="B7LWB6"/>
<dbReference type="GeneID" id="75058738"/>
<dbReference type="KEGG" id="efe:EFER_0178"/>
<dbReference type="HOGENOM" id="CLU_015263_7_0_6"/>
<dbReference type="OrthoDB" id="9767361at2"/>
<dbReference type="Proteomes" id="UP000000745">
    <property type="component" value="Chromosome"/>
</dbReference>
<dbReference type="GO" id="GO:0005886">
    <property type="term" value="C:plasma membrane"/>
    <property type="evidence" value="ECO:0007669"/>
    <property type="project" value="UniProtKB-SubCell"/>
</dbReference>
<dbReference type="GO" id="GO:0015297">
    <property type="term" value="F:antiporter activity"/>
    <property type="evidence" value="ECO:0007669"/>
    <property type="project" value="UniProtKB-UniRule"/>
</dbReference>
<dbReference type="GO" id="GO:0005247">
    <property type="term" value="F:voltage-gated chloride channel activity"/>
    <property type="evidence" value="ECO:0007669"/>
    <property type="project" value="TreeGrafter"/>
</dbReference>
<dbReference type="CDD" id="cd01031">
    <property type="entry name" value="EriC"/>
    <property type="match status" value="1"/>
</dbReference>
<dbReference type="FunFam" id="1.10.3080.10:FF:000005">
    <property type="entry name" value="H(+)/Cl(-) exchange transporter ClcA"/>
    <property type="match status" value="1"/>
</dbReference>
<dbReference type="Gene3D" id="1.10.3080.10">
    <property type="entry name" value="Clc chloride channel"/>
    <property type="match status" value="1"/>
</dbReference>
<dbReference type="HAMAP" id="MF_01128">
    <property type="entry name" value="CLC_ClcA"/>
    <property type="match status" value="1"/>
</dbReference>
<dbReference type="InterPro" id="IPR023861">
    <property type="entry name" value="Cl-channel_ClcA"/>
</dbReference>
<dbReference type="InterPro" id="IPR014743">
    <property type="entry name" value="Cl-channel_core"/>
</dbReference>
<dbReference type="InterPro" id="IPR001807">
    <property type="entry name" value="ClC"/>
</dbReference>
<dbReference type="NCBIfam" id="NF003640">
    <property type="entry name" value="PRK05277.1"/>
    <property type="match status" value="1"/>
</dbReference>
<dbReference type="PANTHER" id="PTHR45711">
    <property type="entry name" value="CHLORIDE CHANNEL PROTEIN"/>
    <property type="match status" value="1"/>
</dbReference>
<dbReference type="PANTHER" id="PTHR45711:SF6">
    <property type="entry name" value="CHLORIDE CHANNEL PROTEIN"/>
    <property type="match status" value="1"/>
</dbReference>
<dbReference type="Pfam" id="PF00654">
    <property type="entry name" value="Voltage_CLC"/>
    <property type="match status" value="1"/>
</dbReference>
<dbReference type="PRINTS" id="PR00762">
    <property type="entry name" value="CLCHANNEL"/>
</dbReference>
<dbReference type="SUPFAM" id="SSF81340">
    <property type="entry name" value="Clc chloride channel"/>
    <property type="match status" value="1"/>
</dbReference>